<reference key="1">
    <citation type="submission" date="1995-12" db="EMBL/GenBank/DDBJ databases">
        <authorList>
            <person name="Ziegler K."/>
            <person name="Schuetz M."/>
            <person name="Zimmermann R."/>
            <person name="Lockau W."/>
        </authorList>
    </citation>
    <scope>NUCLEOTIDE SEQUENCE [GENOMIC DNA]</scope>
</reference>
<reference key="2">
    <citation type="journal article" date="2014" name="Stand. Genomic Sci.">
        <title>Complete genome sequence of Anabaena variabilis ATCC 29413.</title>
        <authorList>
            <person name="Thiel T."/>
            <person name="Pratte B.S."/>
            <person name="Zhong J."/>
            <person name="Goodwin L."/>
            <person name="Copeland A."/>
            <person name="Lucas S."/>
            <person name="Han C."/>
            <person name="Pitluck S."/>
            <person name="Land M.L."/>
            <person name="Kyrpides N.C."/>
            <person name="Woyke T."/>
        </authorList>
    </citation>
    <scope>NUCLEOTIDE SEQUENCE [LARGE SCALE GENOMIC DNA]</scope>
    <source>
        <strain>ATCC 29413 / PCC 7937</strain>
    </source>
</reference>
<reference key="3">
    <citation type="journal article" date="1991" name="FEBS Lett.">
        <title>Identities of four low-molecular-mass subunits of the photosystem I complex from Anabaena variabilis ATCC 29413. Evidence for the presence of the psaI gene product in a cyanobacterial complex.</title>
        <authorList>
            <person name="Ikeuchi M."/>
            <person name="Nyhus K.J."/>
            <person name="Inoue Y."/>
            <person name="Pakrasi H.B."/>
        </authorList>
    </citation>
    <scope>PROTEIN SEQUENCE OF 2-44</scope>
</reference>
<organism>
    <name type="scientific">Trichormus variabilis (strain ATCC 29413 / PCC 7937)</name>
    <name type="common">Anabaena variabilis</name>
    <dbReference type="NCBI Taxonomy" id="240292"/>
    <lineage>
        <taxon>Bacteria</taxon>
        <taxon>Bacillati</taxon>
        <taxon>Cyanobacteriota</taxon>
        <taxon>Cyanophyceae</taxon>
        <taxon>Nostocales</taxon>
        <taxon>Nostocaceae</taxon>
        <taxon>Trichormus</taxon>
    </lineage>
</organism>
<name>PSAJ_TRIV2</name>
<dbReference type="EMBL" id="X93923">
    <property type="protein sequence ID" value="CAA63817.1"/>
    <property type="molecule type" value="Genomic_DNA"/>
</dbReference>
<dbReference type="EMBL" id="CP000117">
    <property type="protein sequence ID" value="ABA21100.1"/>
    <property type="molecule type" value="Genomic_DNA"/>
</dbReference>
<dbReference type="PIR" id="S16977">
    <property type="entry name" value="S16977"/>
</dbReference>
<dbReference type="SMR" id="P23080"/>
<dbReference type="STRING" id="240292.Ava_1477"/>
<dbReference type="KEGG" id="ava:Ava_1477"/>
<dbReference type="eggNOG" id="ENOG5033A5A">
    <property type="taxonomic scope" value="Bacteria"/>
</dbReference>
<dbReference type="HOGENOM" id="CLU_212133_1_1_3"/>
<dbReference type="Proteomes" id="UP000002533">
    <property type="component" value="Chromosome"/>
</dbReference>
<dbReference type="GO" id="GO:0009522">
    <property type="term" value="C:photosystem I"/>
    <property type="evidence" value="ECO:0007669"/>
    <property type="project" value="UniProtKB-KW"/>
</dbReference>
<dbReference type="GO" id="GO:0031676">
    <property type="term" value="C:plasma membrane-derived thylakoid membrane"/>
    <property type="evidence" value="ECO:0007669"/>
    <property type="project" value="UniProtKB-SubCell"/>
</dbReference>
<dbReference type="GO" id="GO:0015979">
    <property type="term" value="P:photosynthesis"/>
    <property type="evidence" value="ECO:0007669"/>
    <property type="project" value="UniProtKB-UniRule"/>
</dbReference>
<dbReference type="Gene3D" id="1.20.5.510">
    <property type="entry name" value="Single helix bin"/>
    <property type="match status" value="1"/>
</dbReference>
<dbReference type="HAMAP" id="MF_00522">
    <property type="entry name" value="PSI_PsaJ"/>
    <property type="match status" value="1"/>
</dbReference>
<dbReference type="InterPro" id="IPR002615">
    <property type="entry name" value="PSI_PsaJ"/>
</dbReference>
<dbReference type="InterPro" id="IPR036062">
    <property type="entry name" value="PSI_PsaJ_sf"/>
</dbReference>
<dbReference type="NCBIfam" id="NF002743">
    <property type="entry name" value="PRK02733.1"/>
    <property type="match status" value="1"/>
</dbReference>
<dbReference type="PANTHER" id="PTHR36082">
    <property type="match status" value="1"/>
</dbReference>
<dbReference type="PANTHER" id="PTHR36082:SF2">
    <property type="entry name" value="PHOTOSYSTEM I REACTION CENTER SUBUNIT IX"/>
    <property type="match status" value="1"/>
</dbReference>
<dbReference type="Pfam" id="PF01701">
    <property type="entry name" value="PSI_PsaJ"/>
    <property type="match status" value="1"/>
</dbReference>
<dbReference type="SUPFAM" id="SSF81544">
    <property type="entry name" value="Subunit IX of photosystem I reaction centre, PsaJ"/>
    <property type="match status" value="1"/>
</dbReference>
<proteinExistence type="evidence at protein level"/>
<gene>
    <name type="primary">psaJ</name>
    <name type="ordered locus">Ava_1477</name>
</gene>
<feature type="initiator methionine" description="Removed" evidence="3">
    <location>
        <position position="1"/>
    </location>
</feature>
<feature type="chain" id="PRO_0000207820" description="Photosystem I reaction center subunit IX">
    <location>
        <begin position="2"/>
        <end position="49"/>
    </location>
</feature>
<feature type="transmembrane region" description="Helical" evidence="2">
    <location>
        <begin position="14"/>
        <end position="34"/>
    </location>
</feature>
<comment type="function">
    <text>May help in the organization of the PsaE and PsaF subunits.</text>
</comment>
<comment type="subcellular location">
    <subcellularLocation>
        <location evidence="1">Cellular thylakoid membrane</location>
        <topology evidence="1">Single-pass membrane protein</topology>
    </subcellularLocation>
</comment>
<comment type="similarity">
    <text evidence="4">Belongs to the PsaJ family.</text>
</comment>
<protein>
    <recommendedName>
        <fullName>Photosystem I reaction center subunit IX</fullName>
    </recommendedName>
</protein>
<accession>P23080</accession>
<accession>Q3MD36</accession>
<accession>Q44553</accession>
<keyword id="KW-0903">Direct protein sequencing</keyword>
<keyword id="KW-0472">Membrane</keyword>
<keyword id="KW-0602">Photosynthesis</keyword>
<keyword id="KW-0603">Photosystem I</keyword>
<keyword id="KW-0793">Thylakoid</keyword>
<keyword id="KW-0812">Transmembrane</keyword>
<keyword id="KW-1133">Transmembrane helix</keyword>
<evidence type="ECO:0000250" key="1"/>
<evidence type="ECO:0000255" key="2"/>
<evidence type="ECO:0000269" key="3">
    <source>
    </source>
</evidence>
<evidence type="ECO:0000305" key="4"/>
<sequence>MADKADQSSYLIKFISTAPVAATIWLIITAGILIEFNRFFPDLLFHPLP</sequence>